<protein>
    <recommendedName>
        <fullName>Methylamine dehydrogenase heavy chain</fullName>
        <shortName>MADH</shortName>
        <ecNumber>1.4.9.1</ecNumber>
    </recommendedName>
    <alternativeName>
        <fullName>Methylamine dehydrogenase (amicyanin)</fullName>
    </alternativeName>
</protein>
<name>DHMH_METME</name>
<proteinExistence type="inferred from homology"/>
<accession>Q59542</accession>
<keyword id="KW-0249">Electron transport</keyword>
<keyword id="KW-0560">Oxidoreductase</keyword>
<keyword id="KW-0574">Periplasm</keyword>
<keyword id="KW-0732">Signal</keyword>
<keyword id="KW-0813">Transport</keyword>
<comment type="function">
    <text>Methylamine dehydrogenase carries out the oxidation of methylamine. Electrons are passed from methylamine dehydrogenase to amicyanin.</text>
</comment>
<comment type="catalytic activity">
    <reaction>
        <text>2 oxidized [amicyanin] + methylamine + H2O = 2 reduced [amicyanin] + formaldehyde + NH4(+) + 2 H(+)</text>
        <dbReference type="Rhea" id="RHEA:30207"/>
        <dbReference type="Rhea" id="RHEA-COMP:11100"/>
        <dbReference type="Rhea" id="RHEA-COMP:11101"/>
        <dbReference type="ChEBI" id="CHEBI:15377"/>
        <dbReference type="ChEBI" id="CHEBI:15378"/>
        <dbReference type="ChEBI" id="CHEBI:16842"/>
        <dbReference type="ChEBI" id="CHEBI:28938"/>
        <dbReference type="ChEBI" id="CHEBI:29036"/>
        <dbReference type="ChEBI" id="CHEBI:49552"/>
        <dbReference type="ChEBI" id="CHEBI:59338"/>
        <dbReference type="EC" id="1.4.9.1"/>
    </reaction>
</comment>
<comment type="subunit">
    <text>Tetramer of two light and two heavy chains.</text>
</comment>
<comment type="subcellular location">
    <subcellularLocation>
        <location>Periplasm</location>
    </subcellularLocation>
</comment>
<comment type="similarity">
    <text evidence="2">Belongs to the aromatic amine dehydrogenase heavy chain family.</text>
</comment>
<evidence type="ECO:0000255" key="1"/>
<evidence type="ECO:0000305" key="2"/>
<reference key="1">
    <citation type="journal article" date="1994" name="J. Bacteriol.">
        <title>Organization of the methylamine utilization (mau) genes in Methylophilus methylotrophus W3A1-NS.</title>
        <authorList>
            <person name="Chistoserdov A.Y."/>
            <person name="McIntire W.S."/>
            <person name="Mathews F.S."/>
            <person name="Lidstrom M.E."/>
        </authorList>
    </citation>
    <scope>NUCLEOTIDE SEQUENCE [GENOMIC DNA]</scope>
</reference>
<gene>
    <name type="primary">mauB</name>
</gene>
<sequence length="405" mass="45244">MTTFDHPSMIRQPKPTGLAGGLVLAALMLSSSLALADATPNQLGSEITAKLQDETSIAIAPASDSKRVYVLDPGNFHMTSTVYTIDGKSSKLLGMTDAGKLPNVMVASDGKFLAIANTMYSRVARGKRDDYLELIDTKTHQPIADIDIPEGRFLTGVFERTAGLSVDDKHLLFQQFSPSPGVGLVDLQQKAFVKIMNVPDCYHIFPTANQNFFMHCRDGSLMQFTYDSKGNTKQKPTKIFHAEKEYLLNNPYYSNSNNHLTWPTYEGKIFQAKLSESGAEFLKPIEVFTDKEKADKWRPGGWQTIAFHKARNELYLLADQREKWTHKLPSRFVFVVDATSGKRLRRIELKHEINSIAVSQDDKPYLYAVSEEAKTLFTFDAVNGKALSSIDELGRAPSMIFIADK</sequence>
<organism>
    <name type="scientific">Methylophilus methylotrophus</name>
    <name type="common">Bacterium W3A1</name>
    <dbReference type="NCBI Taxonomy" id="17"/>
    <lineage>
        <taxon>Bacteria</taxon>
        <taxon>Pseudomonadati</taxon>
        <taxon>Pseudomonadota</taxon>
        <taxon>Betaproteobacteria</taxon>
        <taxon>Nitrosomonadales</taxon>
        <taxon>Methylophilaceae</taxon>
        <taxon>Methylophilus</taxon>
    </lineage>
</organism>
<dbReference type="EC" id="1.4.9.1"/>
<dbReference type="EMBL" id="L26407">
    <property type="protein sequence ID" value="AAB46948.1"/>
    <property type="molecule type" value="Genomic_DNA"/>
</dbReference>
<dbReference type="PIR" id="T10070">
    <property type="entry name" value="T10070"/>
</dbReference>
<dbReference type="SMR" id="Q59542"/>
<dbReference type="STRING" id="1122236.GCA_000378225_02092"/>
<dbReference type="BioCyc" id="MetaCyc:MONOMER-3907"/>
<dbReference type="GO" id="GO:0042597">
    <property type="term" value="C:periplasmic space"/>
    <property type="evidence" value="ECO:0007669"/>
    <property type="project" value="UniProtKB-SubCell"/>
</dbReference>
<dbReference type="GO" id="GO:0030058">
    <property type="term" value="F:aliphatic amine dehydrogenase activity"/>
    <property type="evidence" value="ECO:0007669"/>
    <property type="project" value="InterPro"/>
</dbReference>
<dbReference type="GO" id="GO:0052876">
    <property type="term" value="F:methylamine dehydrogenase (amicyanin) activity"/>
    <property type="evidence" value="ECO:0007669"/>
    <property type="project" value="UniProtKB-EC"/>
</dbReference>
<dbReference type="GO" id="GO:0030416">
    <property type="term" value="P:methylamine metabolic process"/>
    <property type="evidence" value="ECO:0007669"/>
    <property type="project" value="InterPro"/>
</dbReference>
<dbReference type="Gene3D" id="2.130.10.10">
    <property type="entry name" value="YVTN repeat-like/Quinoprotein amine dehydrogenase"/>
    <property type="match status" value="1"/>
</dbReference>
<dbReference type="InterPro" id="IPR051200">
    <property type="entry name" value="Host-pathogen_enzymatic-act"/>
</dbReference>
<dbReference type="InterPro" id="IPR013476">
    <property type="entry name" value="MeN_DH_Hvc"/>
</dbReference>
<dbReference type="InterPro" id="IPR009451">
    <property type="entry name" value="Metamine_DH_Hvc"/>
</dbReference>
<dbReference type="InterPro" id="IPR011044">
    <property type="entry name" value="Quino_amine_DH_bsu"/>
</dbReference>
<dbReference type="InterPro" id="IPR015943">
    <property type="entry name" value="WD40/YVTN_repeat-like_dom_sf"/>
</dbReference>
<dbReference type="NCBIfam" id="TIGR02658">
    <property type="entry name" value="TTQ_MADH_Hv"/>
    <property type="match status" value="1"/>
</dbReference>
<dbReference type="PANTHER" id="PTHR47197:SF3">
    <property type="entry name" value="DIHYDRO-HEME D1 DEHYDROGENASE"/>
    <property type="match status" value="1"/>
</dbReference>
<dbReference type="PANTHER" id="PTHR47197">
    <property type="entry name" value="PROTEIN NIRF"/>
    <property type="match status" value="1"/>
</dbReference>
<dbReference type="Pfam" id="PF06433">
    <property type="entry name" value="Me-amine-dh_H"/>
    <property type="match status" value="1"/>
</dbReference>
<dbReference type="SUPFAM" id="SSF50969">
    <property type="entry name" value="YVTN repeat-like/Quinoprotein amine dehydrogenase"/>
    <property type="match status" value="1"/>
</dbReference>
<feature type="signal peptide" evidence="1">
    <location>
        <begin position="1"/>
        <end position="36"/>
    </location>
</feature>
<feature type="chain" id="PRO_0000025579" description="Methylamine dehydrogenase heavy chain">
    <location>
        <begin position="37"/>
        <end position="405"/>
    </location>
</feature>